<evidence type="ECO:0000250" key="1"/>
<evidence type="ECO:0000255" key="2">
    <source>
        <dbReference type="HAMAP-Rule" id="MF_01057"/>
    </source>
</evidence>
<evidence type="ECO:0000256" key="3">
    <source>
        <dbReference type="SAM" id="MobiDB-lite"/>
    </source>
</evidence>
<proteinExistence type="evidence at protein level"/>
<gene>
    <name evidence="2" type="primary">trmB</name>
    <name type="ordered locus">Rv0208c</name>
    <name type="ORF">MTCY08D5.03c</name>
</gene>
<dbReference type="EC" id="2.1.1.33" evidence="2"/>
<dbReference type="EMBL" id="AL123456">
    <property type="protein sequence ID" value="CCP42936.1"/>
    <property type="molecule type" value="Genomic_DNA"/>
</dbReference>
<dbReference type="PIR" id="F70959">
    <property type="entry name" value="F70959"/>
</dbReference>
<dbReference type="RefSeq" id="NP_214722.1">
    <property type="nucleotide sequence ID" value="NC_000962.3"/>
</dbReference>
<dbReference type="RefSeq" id="WP_003401204.1">
    <property type="nucleotide sequence ID" value="NZ_NVQJ01000001.1"/>
</dbReference>
<dbReference type="SMR" id="P9WFY9"/>
<dbReference type="FunCoup" id="P9WFY9">
    <property type="interactions" value="123"/>
</dbReference>
<dbReference type="STRING" id="83332.Rv0208c"/>
<dbReference type="PaxDb" id="83332-Rv0208c"/>
<dbReference type="DNASU" id="886740"/>
<dbReference type="GeneID" id="45424179"/>
<dbReference type="GeneID" id="886740"/>
<dbReference type="KEGG" id="mtu:Rv0208c"/>
<dbReference type="KEGG" id="mtv:RVBD_0208c"/>
<dbReference type="TubercuList" id="Rv0208c"/>
<dbReference type="eggNOG" id="COG0220">
    <property type="taxonomic scope" value="Bacteria"/>
</dbReference>
<dbReference type="InParanoid" id="P9WFY9"/>
<dbReference type="OrthoDB" id="9802090at2"/>
<dbReference type="PhylomeDB" id="P9WFY9"/>
<dbReference type="UniPathway" id="UPA00989"/>
<dbReference type="Proteomes" id="UP000001584">
    <property type="component" value="Chromosome"/>
</dbReference>
<dbReference type="GO" id="GO:0043527">
    <property type="term" value="C:tRNA methyltransferase complex"/>
    <property type="evidence" value="ECO:0000318"/>
    <property type="project" value="GO_Central"/>
</dbReference>
<dbReference type="GO" id="GO:0008176">
    <property type="term" value="F:tRNA (guanine(46)-N7)-methyltransferase activity"/>
    <property type="evidence" value="ECO:0000318"/>
    <property type="project" value="GO_Central"/>
</dbReference>
<dbReference type="GO" id="GO:0036265">
    <property type="term" value="P:RNA (guanine-N7)-methylation"/>
    <property type="evidence" value="ECO:0000318"/>
    <property type="project" value="GO_Central"/>
</dbReference>
<dbReference type="GO" id="GO:0030488">
    <property type="term" value="P:tRNA methylation"/>
    <property type="evidence" value="ECO:0000318"/>
    <property type="project" value="GO_Central"/>
</dbReference>
<dbReference type="CDD" id="cd02440">
    <property type="entry name" value="AdoMet_MTases"/>
    <property type="match status" value="1"/>
</dbReference>
<dbReference type="FunFam" id="3.40.50.150:FF:000035">
    <property type="entry name" value="tRNA (guanine-N(7)-)-methyltransferase"/>
    <property type="match status" value="1"/>
</dbReference>
<dbReference type="Gene3D" id="3.40.50.150">
    <property type="entry name" value="Vaccinia Virus protein VP39"/>
    <property type="match status" value="1"/>
</dbReference>
<dbReference type="HAMAP" id="MF_01057">
    <property type="entry name" value="tRNA_methyltr_TrmB"/>
    <property type="match status" value="1"/>
</dbReference>
<dbReference type="InterPro" id="IPR029063">
    <property type="entry name" value="SAM-dependent_MTases_sf"/>
</dbReference>
<dbReference type="InterPro" id="IPR003358">
    <property type="entry name" value="tRNA_(Gua-N-7)_MeTrfase_Trmb"/>
</dbReference>
<dbReference type="InterPro" id="IPR055361">
    <property type="entry name" value="tRNA_methyltr_TrmB_bact"/>
</dbReference>
<dbReference type="NCBIfam" id="TIGR00091">
    <property type="entry name" value="tRNA (guanosine(46)-N7)-methyltransferase TrmB"/>
    <property type="match status" value="1"/>
</dbReference>
<dbReference type="PANTHER" id="PTHR23417">
    <property type="entry name" value="3-DEOXY-D-MANNO-OCTULOSONIC-ACID TRANSFERASE/TRNA GUANINE-N 7 - -METHYLTRANSFERASE"/>
    <property type="match status" value="1"/>
</dbReference>
<dbReference type="PANTHER" id="PTHR23417:SF14">
    <property type="entry name" value="PENTACOTRIPEPTIDE-REPEAT REGION OF PRORP DOMAIN-CONTAINING PROTEIN"/>
    <property type="match status" value="1"/>
</dbReference>
<dbReference type="Pfam" id="PF02390">
    <property type="entry name" value="Methyltransf_4"/>
    <property type="match status" value="1"/>
</dbReference>
<dbReference type="SUPFAM" id="SSF53335">
    <property type="entry name" value="S-adenosyl-L-methionine-dependent methyltransferases"/>
    <property type="match status" value="1"/>
</dbReference>
<dbReference type="PROSITE" id="PS51625">
    <property type="entry name" value="SAM_MT_TRMB"/>
    <property type="match status" value="1"/>
</dbReference>
<sequence>MVHHGQMHAQPGVGLRPDTPVASGQLPSTSIRSRRSGISKAQRETWERLWPELGLLALPQSPRGTPVDTRAWFGRDAPVVLEIGSGSGTSTLAMAKAEPHVDVIAVDVYRRGLAQLLCAIDKVGSDGINIRLILGNAVDVLQHLIAPDSLCGVRVFFPDPWPKARHHKRRLLQPATMALIADRLVPSGVLHAATDHPGYAEHIAAAGDAEPRLVRVDPDTELLPISVVRPATKYERKAQLGGGAVIELLWKKHGCSERDLKIR</sequence>
<organism>
    <name type="scientific">Mycobacterium tuberculosis (strain ATCC 25618 / H37Rv)</name>
    <dbReference type="NCBI Taxonomy" id="83332"/>
    <lineage>
        <taxon>Bacteria</taxon>
        <taxon>Bacillati</taxon>
        <taxon>Actinomycetota</taxon>
        <taxon>Actinomycetes</taxon>
        <taxon>Mycobacteriales</taxon>
        <taxon>Mycobacteriaceae</taxon>
        <taxon>Mycobacterium</taxon>
        <taxon>Mycobacterium tuberculosis complex</taxon>
    </lineage>
</organism>
<accession>P9WFY9</accession>
<accession>L0T600</accession>
<accession>P67498</accession>
<accession>P96390</accession>
<keyword id="KW-0489">Methyltransferase</keyword>
<keyword id="KW-1185">Reference proteome</keyword>
<keyword id="KW-0949">S-adenosyl-L-methionine</keyword>
<keyword id="KW-0808">Transferase</keyword>
<keyword id="KW-0819">tRNA processing</keyword>
<name>TRMB_MYCTU</name>
<protein>
    <recommendedName>
        <fullName evidence="2">tRNA (guanine-N(7)-)-methyltransferase</fullName>
        <ecNumber evidence="2">2.1.1.33</ecNumber>
    </recommendedName>
    <alternativeName>
        <fullName evidence="2">tRNA (guanine(46)-N(7))-methyltransferase</fullName>
    </alternativeName>
    <alternativeName>
        <fullName evidence="2">tRNA(m7G46)-methyltransferase</fullName>
    </alternativeName>
</protein>
<reference key="1">
    <citation type="journal article" date="1998" name="Nature">
        <title>Deciphering the biology of Mycobacterium tuberculosis from the complete genome sequence.</title>
        <authorList>
            <person name="Cole S.T."/>
            <person name="Brosch R."/>
            <person name="Parkhill J."/>
            <person name="Garnier T."/>
            <person name="Churcher C.M."/>
            <person name="Harris D.E."/>
            <person name="Gordon S.V."/>
            <person name="Eiglmeier K."/>
            <person name="Gas S."/>
            <person name="Barry C.E. III"/>
            <person name="Tekaia F."/>
            <person name="Badcock K."/>
            <person name="Basham D."/>
            <person name="Brown D."/>
            <person name="Chillingworth T."/>
            <person name="Connor R."/>
            <person name="Davies R.M."/>
            <person name="Devlin K."/>
            <person name="Feltwell T."/>
            <person name="Gentles S."/>
            <person name="Hamlin N."/>
            <person name="Holroyd S."/>
            <person name="Hornsby T."/>
            <person name="Jagels K."/>
            <person name="Krogh A."/>
            <person name="McLean J."/>
            <person name="Moule S."/>
            <person name="Murphy L.D."/>
            <person name="Oliver S."/>
            <person name="Osborne J."/>
            <person name="Quail M.A."/>
            <person name="Rajandream M.A."/>
            <person name="Rogers J."/>
            <person name="Rutter S."/>
            <person name="Seeger K."/>
            <person name="Skelton S."/>
            <person name="Squares S."/>
            <person name="Squares R."/>
            <person name="Sulston J.E."/>
            <person name="Taylor K."/>
            <person name="Whitehead S."/>
            <person name="Barrell B.G."/>
        </authorList>
    </citation>
    <scope>NUCLEOTIDE SEQUENCE [LARGE SCALE GENOMIC DNA]</scope>
    <source>
        <strain>ATCC 25618 / H37Rv</strain>
    </source>
</reference>
<reference key="2">
    <citation type="journal article" date="2008" name="BMC Syst. Biol.">
        <title>targetTB: a target identification pipeline for Mycobacterium tuberculosis through an interactome, reactome and genome-scale structural analysis.</title>
        <authorList>
            <person name="Raman K."/>
            <person name="Yeturu K."/>
            <person name="Chandra N."/>
        </authorList>
    </citation>
    <scope>IDENTIFICATION AS A DRUG TARGET [LARGE SCALE ANALYSIS]</scope>
</reference>
<reference key="3">
    <citation type="journal article" date="2011" name="Mol. Cell. Proteomics">
        <title>Proteogenomic analysis of Mycobacterium tuberculosis by high resolution mass spectrometry.</title>
        <authorList>
            <person name="Kelkar D.S."/>
            <person name="Kumar D."/>
            <person name="Kumar P."/>
            <person name="Balakrishnan L."/>
            <person name="Muthusamy B."/>
            <person name="Yadav A.K."/>
            <person name="Shrivastava P."/>
            <person name="Marimuthu A."/>
            <person name="Anand S."/>
            <person name="Sundaram H."/>
            <person name="Kingsbury R."/>
            <person name="Harsha H.C."/>
            <person name="Nair B."/>
            <person name="Prasad T.S."/>
            <person name="Chauhan D.S."/>
            <person name="Katoch K."/>
            <person name="Katoch V.M."/>
            <person name="Kumar P."/>
            <person name="Chaerkady R."/>
            <person name="Ramachandran S."/>
            <person name="Dash D."/>
            <person name="Pandey A."/>
        </authorList>
    </citation>
    <scope>IDENTIFICATION BY MASS SPECTROMETRY [LARGE SCALE ANALYSIS]</scope>
    <source>
        <strain>ATCC 25618 / H37Rv</strain>
    </source>
</reference>
<comment type="function">
    <text evidence="2">Catalyzes the formation of N(7)-methylguanine at position 46 (m7G46) in tRNA.</text>
</comment>
<comment type="catalytic activity">
    <reaction evidence="2">
        <text>guanosine(46) in tRNA + S-adenosyl-L-methionine = N(7)-methylguanosine(46) in tRNA + S-adenosyl-L-homocysteine</text>
        <dbReference type="Rhea" id="RHEA:42708"/>
        <dbReference type="Rhea" id="RHEA-COMP:10188"/>
        <dbReference type="Rhea" id="RHEA-COMP:10189"/>
        <dbReference type="ChEBI" id="CHEBI:57856"/>
        <dbReference type="ChEBI" id="CHEBI:59789"/>
        <dbReference type="ChEBI" id="CHEBI:74269"/>
        <dbReference type="ChEBI" id="CHEBI:74480"/>
        <dbReference type="EC" id="2.1.1.33"/>
    </reaction>
</comment>
<comment type="pathway">
    <text evidence="2">tRNA modification; N(7)-methylguanine-tRNA biosynthesis.</text>
</comment>
<comment type="miscellaneous">
    <text>Was identified as a high-confidence drug target.</text>
</comment>
<comment type="similarity">
    <text evidence="2">Belongs to the class I-like SAM-binding methyltransferase superfamily. TrmB family.</text>
</comment>
<feature type="chain" id="PRO_0000171361" description="tRNA (guanine-N(7)-)-methyltransferase">
    <location>
        <begin position="1"/>
        <end position="263"/>
    </location>
</feature>
<feature type="region of interest" description="Disordered" evidence="3">
    <location>
        <begin position="1"/>
        <end position="39"/>
    </location>
</feature>
<feature type="active site" evidence="1">
    <location>
        <position position="159"/>
    </location>
</feature>
<feature type="binding site" evidence="2">
    <location>
        <position position="82"/>
    </location>
    <ligand>
        <name>S-adenosyl-L-methionine</name>
        <dbReference type="ChEBI" id="CHEBI:59789"/>
    </ligand>
</feature>
<feature type="binding site" evidence="2">
    <location>
        <position position="107"/>
    </location>
    <ligand>
        <name>S-adenosyl-L-methionine</name>
        <dbReference type="ChEBI" id="CHEBI:59789"/>
    </ligand>
</feature>
<feature type="binding site" evidence="2">
    <location>
        <position position="136"/>
    </location>
    <ligand>
        <name>S-adenosyl-L-methionine</name>
        <dbReference type="ChEBI" id="CHEBI:59789"/>
    </ligand>
</feature>
<feature type="binding site" evidence="2">
    <location>
        <position position="159"/>
    </location>
    <ligand>
        <name>S-adenosyl-L-methionine</name>
        <dbReference type="ChEBI" id="CHEBI:59789"/>
    </ligand>
</feature>
<feature type="binding site" evidence="2">
    <location>
        <position position="163"/>
    </location>
    <ligand>
        <name>substrate</name>
    </ligand>
</feature>
<feature type="binding site" evidence="2">
    <location>
        <position position="195"/>
    </location>
    <ligand>
        <name>substrate</name>
    </ligand>
</feature>
<feature type="binding site" evidence="2">
    <location>
        <begin position="232"/>
        <end position="235"/>
    </location>
    <ligand>
        <name>substrate</name>
    </ligand>
</feature>